<reference key="1">
    <citation type="submission" date="2005-07" db="EMBL/GenBank/DDBJ databases">
        <title>Complete sequence of Synechococcus sp. CC9605.</title>
        <authorList>
            <consortium name="US DOE Joint Genome Institute"/>
            <person name="Copeland A."/>
            <person name="Lucas S."/>
            <person name="Lapidus A."/>
            <person name="Barry K."/>
            <person name="Detter J.C."/>
            <person name="Glavina T."/>
            <person name="Hammon N."/>
            <person name="Israni S."/>
            <person name="Pitluck S."/>
            <person name="Schmutz J."/>
            <person name="Martinez M."/>
            <person name="Larimer F."/>
            <person name="Land M."/>
            <person name="Kyrpides N."/>
            <person name="Ivanova N."/>
            <person name="Richardson P."/>
        </authorList>
    </citation>
    <scope>NUCLEOTIDE SEQUENCE [LARGE SCALE GENOMIC DNA]</scope>
    <source>
        <strain>CC9605</strain>
    </source>
</reference>
<accession>Q3AG80</accession>
<dbReference type="EMBL" id="CP000110">
    <property type="protein sequence ID" value="ABB36402.1"/>
    <property type="molecule type" value="Genomic_DNA"/>
</dbReference>
<dbReference type="RefSeq" id="WP_011365597.1">
    <property type="nucleotide sequence ID" value="NC_007516.1"/>
</dbReference>
<dbReference type="SMR" id="Q3AG80"/>
<dbReference type="STRING" id="110662.Syncc9605_2677"/>
<dbReference type="KEGG" id="syd:Syncc9605_2677"/>
<dbReference type="eggNOG" id="COG0360">
    <property type="taxonomic scope" value="Bacteria"/>
</dbReference>
<dbReference type="HOGENOM" id="CLU_113441_4_2_3"/>
<dbReference type="OrthoDB" id="9812702at2"/>
<dbReference type="GO" id="GO:0005737">
    <property type="term" value="C:cytoplasm"/>
    <property type="evidence" value="ECO:0007669"/>
    <property type="project" value="UniProtKB-ARBA"/>
</dbReference>
<dbReference type="GO" id="GO:1990904">
    <property type="term" value="C:ribonucleoprotein complex"/>
    <property type="evidence" value="ECO:0007669"/>
    <property type="project" value="UniProtKB-KW"/>
</dbReference>
<dbReference type="GO" id="GO:0005840">
    <property type="term" value="C:ribosome"/>
    <property type="evidence" value="ECO:0007669"/>
    <property type="project" value="UniProtKB-KW"/>
</dbReference>
<dbReference type="GO" id="GO:0070181">
    <property type="term" value="F:small ribosomal subunit rRNA binding"/>
    <property type="evidence" value="ECO:0007669"/>
    <property type="project" value="TreeGrafter"/>
</dbReference>
<dbReference type="GO" id="GO:0003735">
    <property type="term" value="F:structural constituent of ribosome"/>
    <property type="evidence" value="ECO:0007669"/>
    <property type="project" value="InterPro"/>
</dbReference>
<dbReference type="GO" id="GO:0006412">
    <property type="term" value="P:translation"/>
    <property type="evidence" value="ECO:0007669"/>
    <property type="project" value="UniProtKB-UniRule"/>
</dbReference>
<dbReference type="CDD" id="cd15487">
    <property type="entry name" value="bS6_chloro_cyano"/>
    <property type="match status" value="1"/>
</dbReference>
<dbReference type="Gene3D" id="3.30.70.60">
    <property type="match status" value="1"/>
</dbReference>
<dbReference type="HAMAP" id="MF_00360">
    <property type="entry name" value="Ribosomal_bS6"/>
    <property type="match status" value="1"/>
</dbReference>
<dbReference type="InterPro" id="IPR000529">
    <property type="entry name" value="Ribosomal_bS6"/>
</dbReference>
<dbReference type="InterPro" id="IPR020815">
    <property type="entry name" value="Ribosomal_bS6_CS"/>
</dbReference>
<dbReference type="InterPro" id="IPR035980">
    <property type="entry name" value="Ribosomal_bS6_sf"/>
</dbReference>
<dbReference type="InterPro" id="IPR020814">
    <property type="entry name" value="Ribosomal_S6_plastid/chlpt"/>
</dbReference>
<dbReference type="InterPro" id="IPR014717">
    <property type="entry name" value="Transl_elong_EF1B/ribsomal_bS6"/>
</dbReference>
<dbReference type="NCBIfam" id="TIGR00166">
    <property type="entry name" value="S6"/>
    <property type="match status" value="1"/>
</dbReference>
<dbReference type="PANTHER" id="PTHR21011">
    <property type="entry name" value="MITOCHONDRIAL 28S RIBOSOMAL PROTEIN S6"/>
    <property type="match status" value="1"/>
</dbReference>
<dbReference type="PANTHER" id="PTHR21011:SF1">
    <property type="entry name" value="SMALL RIBOSOMAL SUBUNIT PROTEIN BS6M"/>
    <property type="match status" value="1"/>
</dbReference>
<dbReference type="Pfam" id="PF01250">
    <property type="entry name" value="Ribosomal_S6"/>
    <property type="match status" value="1"/>
</dbReference>
<dbReference type="SUPFAM" id="SSF54995">
    <property type="entry name" value="Ribosomal protein S6"/>
    <property type="match status" value="1"/>
</dbReference>
<dbReference type="PROSITE" id="PS01048">
    <property type="entry name" value="RIBOSOMAL_S6"/>
    <property type="match status" value="1"/>
</dbReference>
<gene>
    <name evidence="1" type="primary">rpsF</name>
    <name evidence="1" type="synonym">rps6</name>
    <name type="ordered locus">Syncc9605_2677</name>
</gene>
<proteinExistence type="inferred from homology"/>
<feature type="chain" id="PRO_1000005378" description="Small ribosomal subunit protein bS6">
    <location>
        <begin position="1"/>
        <end position="124"/>
    </location>
</feature>
<feature type="region of interest" description="Disordered" evidence="2">
    <location>
        <begin position="99"/>
        <end position="124"/>
    </location>
</feature>
<feature type="compositionally biased region" description="Low complexity" evidence="2">
    <location>
        <begin position="109"/>
        <end position="124"/>
    </location>
</feature>
<organism>
    <name type="scientific">Synechococcus sp. (strain CC9605)</name>
    <dbReference type="NCBI Taxonomy" id="110662"/>
    <lineage>
        <taxon>Bacteria</taxon>
        <taxon>Bacillati</taxon>
        <taxon>Cyanobacteriota</taxon>
        <taxon>Cyanophyceae</taxon>
        <taxon>Synechococcales</taxon>
        <taxon>Synechococcaceae</taxon>
        <taxon>Synechococcus</taxon>
    </lineage>
</organism>
<evidence type="ECO:0000255" key="1">
    <source>
        <dbReference type="HAMAP-Rule" id="MF_00360"/>
    </source>
</evidence>
<evidence type="ECO:0000256" key="2">
    <source>
        <dbReference type="SAM" id="MobiDB-lite"/>
    </source>
</evidence>
<evidence type="ECO:0000305" key="3"/>
<keyword id="KW-0687">Ribonucleoprotein</keyword>
<keyword id="KW-0689">Ribosomal protein</keyword>
<keyword id="KW-0694">RNA-binding</keyword>
<keyword id="KW-0699">rRNA-binding</keyword>
<protein>
    <recommendedName>
        <fullName evidence="1">Small ribosomal subunit protein bS6</fullName>
    </recommendedName>
    <alternativeName>
        <fullName evidence="3">30S ribosomal protein S6</fullName>
    </alternativeName>
</protein>
<sequence length="124" mass="13990">MTHDPYYETMYILRPDIPEEEVESHLTKYRDMLVEAGAEVLDNQMRGKRRLAYPIAKHKEGIYVQLSHNGDGQHVAVLEKAMRLSEDVIRYLTVKQEGPLPAPRVMPGSEAAQQQQAEAAASAD</sequence>
<comment type="function">
    <text evidence="1">Binds together with bS18 to 16S ribosomal RNA.</text>
</comment>
<comment type="similarity">
    <text evidence="1">Belongs to the bacterial ribosomal protein bS6 family.</text>
</comment>
<name>RS6_SYNSC</name>